<name>NANE_STAAS</name>
<protein>
    <recommendedName>
        <fullName evidence="1">Putative N-acetylmannosamine-6-phosphate 2-epimerase</fullName>
        <ecNumber evidence="1">5.1.3.9</ecNumber>
    </recommendedName>
    <alternativeName>
        <fullName evidence="1">ManNAc-6-P epimerase</fullName>
    </alternativeName>
</protein>
<proteinExistence type="inferred from homology"/>
<reference key="1">
    <citation type="journal article" date="2004" name="Proc. Natl. Acad. Sci. U.S.A.">
        <title>Complete genomes of two clinical Staphylococcus aureus strains: evidence for the rapid evolution of virulence and drug resistance.</title>
        <authorList>
            <person name="Holden M.T.G."/>
            <person name="Feil E.J."/>
            <person name="Lindsay J.A."/>
            <person name="Peacock S.J."/>
            <person name="Day N.P.J."/>
            <person name="Enright M.C."/>
            <person name="Foster T.J."/>
            <person name="Moore C.E."/>
            <person name="Hurst L."/>
            <person name="Atkin R."/>
            <person name="Barron A."/>
            <person name="Bason N."/>
            <person name="Bentley S.D."/>
            <person name="Chillingworth C."/>
            <person name="Chillingworth T."/>
            <person name="Churcher C."/>
            <person name="Clark L."/>
            <person name="Corton C."/>
            <person name="Cronin A."/>
            <person name="Doggett J."/>
            <person name="Dowd L."/>
            <person name="Feltwell T."/>
            <person name="Hance Z."/>
            <person name="Harris B."/>
            <person name="Hauser H."/>
            <person name="Holroyd S."/>
            <person name="Jagels K."/>
            <person name="James K.D."/>
            <person name="Lennard N."/>
            <person name="Line A."/>
            <person name="Mayes R."/>
            <person name="Moule S."/>
            <person name="Mungall K."/>
            <person name="Ormond D."/>
            <person name="Quail M.A."/>
            <person name="Rabbinowitsch E."/>
            <person name="Rutherford K.M."/>
            <person name="Sanders M."/>
            <person name="Sharp S."/>
            <person name="Simmonds M."/>
            <person name="Stevens K."/>
            <person name="Whitehead S."/>
            <person name="Barrell B.G."/>
            <person name="Spratt B.G."/>
            <person name="Parkhill J."/>
        </authorList>
    </citation>
    <scope>NUCLEOTIDE SEQUENCE [LARGE SCALE GENOMIC DNA]</scope>
    <source>
        <strain>MSSA476</strain>
    </source>
</reference>
<evidence type="ECO:0000255" key="1">
    <source>
        <dbReference type="HAMAP-Rule" id="MF_01235"/>
    </source>
</evidence>
<keyword id="KW-0119">Carbohydrate metabolism</keyword>
<keyword id="KW-0413">Isomerase</keyword>
<gene>
    <name evidence="1" type="primary">nanE</name>
    <name type="ordered locus">SAS0295</name>
</gene>
<dbReference type="EC" id="5.1.3.9" evidence="1"/>
<dbReference type="EMBL" id="BX571857">
    <property type="protein sequence ID" value="CAG42066.1"/>
    <property type="molecule type" value="Genomic_DNA"/>
</dbReference>
<dbReference type="RefSeq" id="WP_000936729.1">
    <property type="nucleotide sequence ID" value="NC_002953.3"/>
</dbReference>
<dbReference type="SMR" id="Q6GCF3"/>
<dbReference type="KEGG" id="sas:SAS0295"/>
<dbReference type="HOGENOM" id="CLU_086300_1_0_9"/>
<dbReference type="UniPathway" id="UPA00629">
    <property type="reaction ID" value="UER00682"/>
</dbReference>
<dbReference type="GO" id="GO:0005829">
    <property type="term" value="C:cytosol"/>
    <property type="evidence" value="ECO:0007669"/>
    <property type="project" value="TreeGrafter"/>
</dbReference>
<dbReference type="GO" id="GO:0047465">
    <property type="term" value="F:N-acylglucosamine-6-phosphate 2-epimerase activity"/>
    <property type="evidence" value="ECO:0007669"/>
    <property type="project" value="UniProtKB-EC"/>
</dbReference>
<dbReference type="GO" id="GO:0005975">
    <property type="term" value="P:carbohydrate metabolic process"/>
    <property type="evidence" value="ECO:0007669"/>
    <property type="project" value="UniProtKB-UniRule"/>
</dbReference>
<dbReference type="GO" id="GO:0006053">
    <property type="term" value="P:N-acetylmannosamine catabolic process"/>
    <property type="evidence" value="ECO:0007669"/>
    <property type="project" value="TreeGrafter"/>
</dbReference>
<dbReference type="GO" id="GO:0019262">
    <property type="term" value="P:N-acetylneuraminate catabolic process"/>
    <property type="evidence" value="ECO:0007669"/>
    <property type="project" value="UniProtKB-UniRule"/>
</dbReference>
<dbReference type="CDD" id="cd04729">
    <property type="entry name" value="NanE"/>
    <property type="match status" value="1"/>
</dbReference>
<dbReference type="FunFam" id="3.20.20.70:FF:000035">
    <property type="entry name" value="Putative N-acetylmannosamine-6-phosphate 2-epimerase"/>
    <property type="match status" value="1"/>
</dbReference>
<dbReference type="Gene3D" id="3.20.20.70">
    <property type="entry name" value="Aldolase class I"/>
    <property type="match status" value="1"/>
</dbReference>
<dbReference type="HAMAP" id="MF_01235">
    <property type="entry name" value="ManNAc6P_epimer"/>
    <property type="match status" value="1"/>
</dbReference>
<dbReference type="InterPro" id="IPR013785">
    <property type="entry name" value="Aldolase_TIM"/>
</dbReference>
<dbReference type="InterPro" id="IPR007260">
    <property type="entry name" value="NanE"/>
</dbReference>
<dbReference type="InterPro" id="IPR011060">
    <property type="entry name" value="RibuloseP-bd_barrel"/>
</dbReference>
<dbReference type="NCBIfam" id="NF002231">
    <property type="entry name" value="PRK01130.1"/>
    <property type="match status" value="1"/>
</dbReference>
<dbReference type="PANTHER" id="PTHR36204">
    <property type="entry name" value="N-ACETYLMANNOSAMINE-6-PHOSPHATE 2-EPIMERASE-RELATED"/>
    <property type="match status" value="1"/>
</dbReference>
<dbReference type="PANTHER" id="PTHR36204:SF1">
    <property type="entry name" value="N-ACETYLMANNOSAMINE-6-PHOSPHATE 2-EPIMERASE-RELATED"/>
    <property type="match status" value="1"/>
</dbReference>
<dbReference type="Pfam" id="PF04131">
    <property type="entry name" value="NanE"/>
    <property type="match status" value="1"/>
</dbReference>
<dbReference type="SUPFAM" id="SSF51366">
    <property type="entry name" value="Ribulose-phoshate binding barrel"/>
    <property type="match status" value="1"/>
</dbReference>
<accession>Q6GCF3</accession>
<feature type="chain" id="PRO_0000179801" description="Putative N-acetylmannosamine-6-phosphate 2-epimerase">
    <location>
        <begin position="1"/>
        <end position="222"/>
    </location>
</feature>
<sequence>MLPHGLIVSCQALPDEPLHSSFIMSKMALAAYEGGAVGIRANTKEDILAIKETVDLPVIGIVKRDYNHSDVFITATSKEVDELIESQCEVIALDATLQQRPKETLDELVSYIRTHAPNVEIMADIATVEEAKNAARLGFDYIGTTLHGYTSYTQGQLLYQNDFQFLKDVLQSVDAKVIAEGNVITPDMYKRVMDLGVHCSVVGGAITRPKEITKRFVQVMED</sequence>
<organism>
    <name type="scientific">Staphylococcus aureus (strain MSSA476)</name>
    <dbReference type="NCBI Taxonomy" id="282459"/>
    <lineage>
        <taxon>Bacteria</taxon>
        <taxon>Bacillati</taxon>
        <taxon>Bacillota</taxon>
        <taxon>Bacilli</taxon>
        <taxon>Bacillales</taxon>
        <taxon>Staphylococcaceae</taxon>
        <taxon>Staphylococcus</taxon>
    </lineage>
</organism>
<comment type="function">
    <text evidence="1">Converts N-acetylmannosamine-6-phosphate (ManNAc-6-P) to N-acetylglucosamine-6-phosphate (GlcNAc-6-P).</text>
</comment>
<comment type="catalytic activity">
    <reaction evidence="1">
        <text>an N-acyl-D-glucosamine 6-phosphate = an N-acyl-D-mannosamine 6-phosphate</text>
        <dbReference type="Rhea" id="RHEA:23932"/>
        <dbReference type="ChEBI" id="CHEBI:57599"/>
        <dbReference type="ChEBI" id="CHEBI:57666"/>
        <dbReference type="EC" id="5.1.3.9"/>
    </reaction>
</comment>
<comment type="pathway">
    <text evidence="1">Amino-sugar metabolism; N-acetylneuraminate degradation; D-fructose 6-phosphate from N-acetylneuraminate: step 3/5.</text>
</comment>
<comment type="similarity">
    <text evidence="1">Belongs to the NanE family.</text>
</comment>